<protein>
    <recommendedName>
        <fullName>Probable cytochrome P450 6t3</fullName>
        <ecNumber>1.14.-.-</ecNumber>
    </recommendedName>
    <alternativeName>
        <fullName>CYPVIT3</fullName>
    </alternativeName>
</protein>
<evidence type="ECO:0000250" key="1"/>
<evidence type="ECO:0000305" key="2"/>
<dbReference type="EC" id="1.14.-.-"/>
<dbReference type="EMBL" id="AE013599">
    <property type="protein sequence ID" value="AAF58555.1"/>
    <property type="molecule type" value="Genomic_DNA"/>
</dbReference>
<dbReference type="RefSeq" id="NP_610745.1">
    <property type="nucleotide sequence ID" value="NM_136901.2"/>
</dbReference>
<dbReference type="SMR" id="Q9V676"/>
<dbReference type="BioGRID" id="62096">
    <property type="interactions" value="9"/>
</dbReference>
<dbReference type="DIP" id="DIP-20703N"/>
<dbReference type="IntAct" id="Q9V676">
    <property type="interactions" value="4"/>
</dbReference>
<dbReference type="STRING" id="7227.FBpp0087101"/>
<dbReference type="PaxDb" id="7227-FBpp0087101"/>
<dbReference type="EnsemblMetazoa" id="FBtr0087993">
    <property type="protein sequence ID" value="FBpp0087101"/>
    <property type="gene ID" value="FBgn0033697"/>
</dbReference>
<dbReference type="GeneID" id="36318"/>
<dbReference type="KEGG" id="dme:Dmel_CG8457"/>
<dbReference type="UCSC" id="CG8457-RA">
    <property type="organism name" value="d. melanogaster"/>
</dbReference>
<dbReference type="AGR" id="FB:FBgn0033697"/>
<dbReference type="CTD" id="36318"/>
<dbReference type="FlyBase" id="FBgn0033697">
    <property type="gene designation" value="Cyp6t3"/>
</dbReference>
<dbReference type="VEuPathDB" id="VectorBase:FBgn0033697"/>
<dbReference type="eggNOG" id="KOG0158">
    <property type="taxonomic scope" value="Eukaryota"/>
</dbReference>
<dbReference type="GeneTree" id="ENSGT00940000167661"/>
<dbReference type="HOGENOM" id="CLU_001570_5_2_1"/>
<dbReference type="InParanoid" id="Q9V676"/>
<dbReference type="OMA" id="ERHNIVH"/>
<dbReference type="OrthoDB" id="2789670at2759"/>
<dbReference type="PhylomeDB" id="Q9V676"/>
<dbReference type="SignaLink" id="Q9V676"/>
<dbReference type="BioGRID-ORCS" id="36318">
    <property type="hits" value="0 hits in 1 CRISPR screen"/>
</dbReference>
<dbReference type="GenomeRNAi" id="36318"/>
<dbReference type="PRO" id="PR:Q9V676"/>
<dbReference type="Proteomes" id="UP000000803">
    <property type="component" value="Chromosome 2R"/>
</dbReference>
<dbReference type="Bgee" id="FBgn0033697">
    <property type="expression patterns" value="Expressed in epithelial cell in antenna and 21 other cell types or tissues"/>
</dbReference>
<dbReference type="ExpressionAtlas" id="Q9V676">
    <property type="expression patterns" value="baseline and differential"/>
</dbReference>
<dbReference type="GO" id="GO:0005789">
    <property type="term" value="C:endoplasmic reticulum membrane"/>
    <property type="evidence" value="ECO:0007669"/>
    <property type="project" value="UniProtKB-SubCell"/>
</dbReference>
<dbReference type="GO" id="GO:0020037">
    <property type="term" value="F:heme binding"/>
    <property type="evidence" value="ECO:0007669"/>
    <property type="project" value="InterPro"/>
</dbReference>
<dbReference type="GO" id="GO:0005506">
    <property type="term" value="F:iron ion binding"/>
    <property type="evidence" value="ECO:0007669"/>
    <property type="project" value="InterPro"/>
</dbReference>
<dbReference type="GO" id="GO:0004497">
    <property type="term" value="F:monooxygenase activity"/>
    <property type="evidence" value="ECO:0007669"/>
    <property type="project" value="UniProtKB-KW"/>
</dbReference>
<dbReference type="GO" id="GO:0016705">
    <property type="term" value="F:oxidoreductase activity, acting on paired donors, with incorporation or reduction of molecular oxygen"/>
    <property type="evidence" value="ECO:0007669"/>
    <property type="project" value="InterPro"/>
</dbReference>
<dbReference type="GO" id="GO:0006697">
    <property type="term" value="P:ecdysone biosynthetic process"/>
    <property type="evidence" value="ECO:0000315"/>
    <property type="project" value="FlyBase"/>
</dbReference>
<dbReference type="GO" id="GO:0046701">
    <property type="term" value="P:insecticide catabolic process"/>
    <property type="evidence" value="ECO:0000318"/>
    <property type="project" value="GO_Central"/>
</dbReference>
<dbReference type="GO" id="GO:0048638">
    <property type="term" value="P:regulation of developmental growth"/>
    <property type="evidence" value="ECO:0000315"/>
    <property type="project" value="FlyBase"/>
</dbReference>
<dbReference type="GO" id="GO:0046680">
    <property type="term" value="P:response to DDT"/>
    <property type="evidence" value="ECO:0000318"/>
    <property type="project" value="GO_Central"/>
</dbReference>
<dbReference type="CDD" id="cd11056">
    <property type="entry name" value="CYP6-like"/>
    <property type="match status" value="1"/>
</dbReference>
<dbReference type="FunFam" id="1.10.630.10:FF:000042">
    <property type="entry name" value="Cytochrome P450"/>
    <property type="match status" value="1"/>
</dbReference>
<dbReference type="Gene3D" id="1.10.630.10">
    <property type="entry name" value="Cytochrome P450"/>
    <property type="match status" value="1"/>
</dbReference>
<dbReference type="InterPro" id="IPR001128">
    <property type="entry name" value="Cyt_P450"/>
</dbReference>
<dbReference type="InterPro" id="IPR017972">
    <property type="entry name" value="Cyt_P450_CS"/>
</dbReference>
<dbReference type="InterPro" id="IPR002401">
    <property type="entry name" value="Cyt_P450_E_grp-I"/>
</dbReference>
<dbReference type="InterPro" id="IPR036396">
    <property type="entry name" value="Cyt_P450_sf"/>
</dbReference>
<dbReference type="InterPro" id="IPR050476">
    <property type="entry name" value="Insect_CytP450_Detox"/>
</dbReference>
<dbReference type="PANTHER" id="PTHR24292">
    <property type="entry name" value="CYTOCHROME P450"/>
    <property type="match status" value="1"/>
</dbReference>
<dbReference type="PANTHER" id="PTHR24292:SF45">
    <property type="entry name" value="CYTOCHROME P450 6G1-RELATED"/>
    <property type="match status" value="1"/>
</dbReference>
<dbReference type="Pfam" id="PF00067">
    <property type="entry name" value="p450"/>
    <property type="match status" value="1"/>
</dbReference>
<dbReference type="PRINTS" id="PR00463">
    <property type="entry name" value="EP450I"/>
</dbReference>
<dbReference type="PRINTS" id="PR00385">
    <property type="entry name" value="P450"/>
</dbReference>
<dbReference type="SUPFAM" id="SSF48264">
    <property type="entry name" value="Cytochrome P450"/>
    <property type="match status" value="1"/>
</dbReference>
<dbReference type="PROSITE" id="PS00086">
    <property type="entry name" value="CYTOCHROME_P450"/>
    <property type="match status" value="1"/>
</dbReference>
<accession>Q9V676</accession>
<name>CP6T3_DROME</name>
<feature type="chain" id="PRO_0000051889" description="Probable cytochrome P450 6t3">
    <location>
        <begin position="1"/>
        <end position="501"/>
    </location>
</feature>
<feature type="binding site" description="axial binding residue" evidence="1">
    <location>
        <position position="444"/>
    </location>
    <ligand>
        <name>heme</name>
        <dbReference type="ChEBI" id="CHEBI:30413"/>
    </ligand>
    <ligandPart>
        <name>Fe</name>
        <dbReference type="ChEBI" id="CHEBI:18248"/>
    </ligandPart>
</feature>
<reference key="1">
    <citation type="journal article" date="2000" name="Science">
        <title>The genome sequence of Drosophila melanogaster.</title>
        <authorList>
            <person name="Adams M.D."/>
            <person name="Celniker S.E."/>
            <person name="Holt R.A."/>
            <person name="Evans C.A."/>
            <person name="Gocayne J.D."/>
            <person name="Amanatides P.G."/>
            <person name="Scherer S.E."/>
            <person name="Li P.W."/>
            <person name="Hoskins R.A."/>
            <person name="Galle R.F."/>
            <person name="George R.A."/>
            <person name="Lewis S.E."/>
            <person name="Richards S."/>
            <person name="Ashburner M."/>
            <person name="Henderson S.N."/>
            <person name="Sutton G.G."/>
            <person name="Wortman J.R."/>
            <person name="Yandell M.D."/>
            <person name="Zhang Q."/>
            <person name="Chen L.X."/>
            <person name="Brandon R.C."/>
            <person name="Rogers Y.-H.C."/>
            <person name="Blazej R.G."/>
            <person name="Champe M."/>
            <person name="Pfeiffer B.D."/>
            <person name="Wan K.H."/>
            <person name="Doyle C."/>
            <person name="Baxter E.G."/>
            <person name="Helt G."/>
            <person name="Nelson C.R."/>
            <person name="Miklos G.L.G."/>
            <person name="Abril J.F."/>
            <person name="Agbayani A."/>
            <person name="An H.-J."/>
            <person name="Andrews-Pfannkoch C."/>
            <person name="Baldwin D."/>
            <person name="Ballew R.M."/>
            <person name="Basu A."/>
            <person name="Baxendale J."/>
            <person name="Bayraktaroglu L."/>
            <person name="Beasley E.M."/>
            <person name="Beeson K.Y."/>
            <person name="Benos P.V."/>
            <person name="Berman B.P."/>
            <person name="Bhandari D."/>
            <person name="Bolshakov S."/>
            <person name="Borkova D."/>
            <person name="Botchan M.R."/>
            <person name="Bouck J."/>
            <person name="Brokstein P."/>
            <person name="Brottier P."/>
            <person name="Burtis K.C."/>
            <person name="Busam D.A."/>
            <person name="Butler H."/>
            <person name="Cadieu E."/>
            <person name="Center A."/>
            <person name="Chandra I."/>
            <person name="Cherry J.M."/>
            <person name="Cawley S."/>
            <person name="Dahlke C."/>
            <person name="Davenport L.B."/>
            <person name="Davies P."/>
            <person name="de Pablos B."/>
            <person name="Delcher A."/>
            <person name="Deng Z."/>
            <person name="Mays A.D."/>
            <person name="Dew I."/>
            <person name="Dietz S.M."/>
            <person name="Dodson K."/>
            <person name="Doup L.E."/>
            <person name="Downes M."/>
            <person name="Dugan-Rocha S."/>
            <person name="Dunkov B.C."/>
            <person name="Dunn P."/>
            <person name="Durbin K.J."/>
            <person name="Evangelista C.C."/>
            <person name="Ferraz C."/>
            <person name="Ferriera S."/>
            <person name="Fleischmann W."/>
            <person name="Fosler C."/>
            <person name="Gabrielian A.E."/>
            <person name="Garg N.S."/>
            <person name="Gelbart W.M."/>
            <person name="Glasser K."/>
            <person name="Glodek A."/>
            <person name="Gong F."/>
            <person name="Gorrell J.H."/>
            <person name="Gu Z."/>
            <person name="Guan P."/>
            <person name="Harris M."/>
            <person name="Harris N.L."/>
            <person name="Harvey D.A."/>
            <person name="Heiman T.J."/>
            <person name="Hernandez J.R."/>
            <person name="Houck J."/>
            <person name="Hostin D."/>
            <person name="Houston K.A."/>
            <person name="Howland T.J."/>
            <person name="Wei M.-H."/>
            <person name="Ibegwam C."/>
            <person name="Jalali M."/>
            <person name="Kalush F."/>
            <person name="Karpen G.H."/>
            <person name="Ke Z."/>
            <person name="Kennison J.A."/>
            <person name="Ketchum K.A."/>
            <person name="Kimmel B.E."/>
            <person name="Kodira C.D."/>
            <person name="Kraft C.L."/>
            <person name="Kravitz S."/>
            <person name="Kulp D."/>
            <person name="Lai Z."/>
            <person name="Lasko P."/>
            <person name="Lei Y."/>
            <person name="Levitsky A.A."/>
            <person name="Li J.H."/>
            <person name="Li Z."/>
            <person name="Liang Y."/>
            <person name="Lin X."/>
            <person name="Liu X."/>
            <person name="Mattei B."/>
            <person name="McIntosh T.C."/>
            <person name="McLeod M.P."/>
            <person name="McPherson D."/>
            <person name="Merkulov G."/>
            <person name="Milshina N.V."/>
            <person name="Mobarry C."/>
            <person name="Morris J."/>
            <person name="Moshrefi A."/>
            <person name="Mount S.M."/>
            <person name="Moy M."/>
            <person name="Murphy B."/>
            <person name="Murphy L."/>
            <person name="Muzny D.M."/>
            <person name="Nelson D.L."/>
            <person name="Nelson D.R."/>
            <person name="Nelson K.A."/>
            <person name="Nixon K."/>
            <person name="Nusskern D.R."/>
            <person name="Pacleb J.M."/>
            <person name="Palazzolo M."/>
            <person name="Pittman G.S."/>
            <person name="Pan S."/>
            <person name="Pollard J."/>
            <person name="Puri V."/>
            <person name="Reese M.G."/>
            <person name="Reinert K."/>
            <person name="Remington K."/>
            <person name="Saunders R.D.C."/>
            <person name="Scheeler F."/>
            <person name="Shen H."/>
            <person name="Shue B.C."/>
            <person name="Siden-Kiamos I."/>
            <person name="Simpson M."/>
            <person name="Skupski M.P."/>
            <person name="Smith T.J."/>
            <person name="Spier E."/>
            <person name="Spradling A.C."/>
            <person name="Stapleton M."/>
            <person name="Strong R."/>
            <person name="Sun E."/>
            <person name="Svirskas R."/>
            <person name="Tector C."/>
            <person name="Turner R."/>
            <person name="Venter E."/>
            <person name="Wang A.H."/>
            <person name="Wang X."/>
            <person name="Wang Z.-Y."/>
            <person name="Wassarman D.A."/>
            <person name="Weinstock G.M."/>
            <person name="Weissenbach J."/>
            <person name="Williams S.M."/>
            <person name="Woodage T."/>
            <person name="Worley K.C."/>
            <person name="Wu D."/>
            <person name="Yang S."/>
            <person name="Yao Q.A."/>
            <person name="Ye J."/>
            <person name="Yeh R.-F."/>
            <person name="Zaveri J.S."/>
            <person name="Zhan M."/>
            <person name="Zhang G."/>
            <person name="Zhao Q."/>
            <person name="Zheng L."/>
            <person name="Zheng X.H."/>
            <person name="Zhong F.N."/>
            <person name="Zhong W."/>
            <person name="Zhou X."/>
            <person name="Zhu S.C."/>
            <person name="Zhu X."/>
            <person name="Smith H.O."/>
            <person name="Gibbs R.A."/>
            <person name="Myers E.W."/>
            <person name="Rubin G.M."/>
            <person name="Venter J.C."/>
        </authorList>
    </citation>
    <scope>NUCLEOTIDE SEQUENCE [LARGE SCALE GENOMIC DNA]</scope>
    <source>
        <strain>Berkeley</strain>
    </source>
</reference>
<reference key="2">
    <citation type="journal article" date="2002" name="Genome Biol.">
        <title>Annotation of the Drosophila melanogaster euchromatic genome: a systematic review.</title>
        <authorList>
            <person name="Misra S."/>
            <person name="Crosby M.A."/>
            <person name="Mungall C.J."/>
            <person name="Matthews B.B."/>
            <person name="Campbell K.S."/>
            <person name="Hradecky P."/>
            <person name="Huang Y."/>
            <person name="Kaminker J.S."/>
            <person name="Millburn G.H."/>
            <person name="Prochnik S.E."/>
            <person name="Smith C.D."/>
            <person name="Tupy J.L."/>
            <person name="Whitfield E.J."/>
            <person name="Bayraktaroglu L."/>
            <person name="Berman B.P."/>
            <person name="Bettencourt B.R."/>
            <person name="Celniker S.E."/>
            <person name="de Grey A.D.N.J."/>
            <person name="Drysdale R.A."/>
            <person name="Harris N.L."/>
            <person name="Richter J."/>
            <person name="Russo S."/>
            <person name="Schroeder A.J."/>
            <person name="Shu S.Q."/>
            <person name="Stapleton M."/>
            <person name="Yamada C."/>
            <person name="Ashburner M."/>
            <person name="Gelbart W.M."/>
            <person name="Rubin G.M."/>
            <person name="Lewis S.E."/>
        </authorList>
    </citation>
    <scope>GENOME REANNOTATION</scope>
    <source>
        <strain>Berkeley</strain>
    </source>
</reference>
<proteinExistence type="inferred from homology"/>
<gene>
    <name type="primary">Cyp6t3</name>
    <name type="ORF">CG8457</name>
</gene>
<comment type="function">
    <text evidence="1">May be involved in the metabolism of insect hormones and in the breakdown of synthetic insecticides.</text>
</comment>
<comment type="cofactor">
    <cofactor evidence="1">
        <name>heme</name>
        <dbReference type="ChEBI" id="CHEBI:30413"/>
    </cofactor>
</comment>
<comment type="subcellular location">
    <subcellularLocation>
        <location evidence="2">Endoplasmic reticulum membrane</location>
        <topology evidence="2">Peripheral membrane protein</topology>
    </subcellularLocation>
    <subcellularLocation>
        <location evidence="2">Microsome membrane</location>
        <topology evidence="2">Peripheral membrane protein</topology>
    </subcellularLocation>
</comment>
<comment type="similarity">
    <text evidence="2">Belongs to the cytochrome P450 family.</text>
</comment>
<keyword id="KW-0256">Endoplasmic reticulum</keyword>
<keyword id="KW-0349">Heme</keyword>
<keyword id="KW-0408">Iron</keyword>
<keyword id="KW-0472">Membrane</keyword>
<keyword id="KW-0479">Metal-binding</keyword>
<keyword id="KW-0492">Microsome</keyword>
<keyword id="KW-0503">Monooxygenase</keyword>
<keyword id="KW-0560">Oxidoreductase</keyword>
<keyword id="KW-1185">Reference proteome</keyword>
<organism>
    <name type="scientific">Drosophila melanogaster</name>
    <name type="common">Fruit fly</name>
    <dbReference type="NCBI Taxonomy" id="7227"/>
    <lineage>
        <taxon>Eukaryota</taxon>
        <taxon>Metazoa</taxon>
        <taxon>Ecdysozoa</taxon>
        <taxon>Arthropoda</taxon>
        <taxon>Hexapoda</taxon>
        <taxon>Insecta</taxon>
        <taxon>Pterygota</taxon>
        <taxon>Neoptera</taxon>
        <taxon>Endopterygota</taxon>
        <taxon>Diptera</taxon>
        <taxon>Brachycera</taxon>
        <taxon>Muscomorpha</taxon>
        <taxon>Ephydroidea</taxon>
        <taxon>Drosophilidae</taxon>
        <taxon>Drosophila</taxon>
        <taxon>Sophophora</taxon>
    </lineage>
</organism>
<sequence>MLLIWLLLLTIVTLNFWLRHKYDYFRSRGIPHLPPSSWSPMGNLGQLLFLRISFGDLFRQLYADPRNGQAKIVGFFIFQTPALMVRDPELIRQVLIKNFNNFLNRFESADAGDPMGALTLPLAKYHHWKESRQCMSQLFTSGRMRDVMYSQMLDVASDLEQYLNRKLGDRLERVLPLGRMCQLYTTDVTGNLFYSLNVGGLRRGRSELITKTKELFNTNPRKVLDFMSVFFLPKWTGVLKPKVFTEDYARYMRHLVDDHHEPTKGDLINQLQHFQLSRSSNHYSQHPDFVASQAGIILLAGFETSSALMGFTLYELAKAPDIQERLRSELREAFISTATLSYDTLMTLPYLKMVCLEALRLYPAAAFVNRECTSSASEGFSLQPHVDFIVPPGMPAYISILGLHRDERFWPEPCVFDPERFGPERSRHIHPMTYIPFGAGPHGCIGSRLGVLQLKLGIVHILKQYWVETCERTVSEIRFNPKSFMLESENEIYLRFCRSSL</sequence>